<sequence length="261" mass="28603">MNKRNWLLALSLSLAFSPCYADWAKLKAAASDLGAAVSETSKEVWQDVSDFSKKSWASISAWGEEAFNTAGVWTDKSIATGKEWLKAADKELNEMLNPKTAKEARIAINTMADTALIRLFNEQPSAKLLFDKAYGYAVFDSRKFSLMLHTNQGAGVAVNRKTGKHTYMKMFGAGLAAGIGGKFYQQVILFEDKARFDAFVTQGWEATSEVGVVAGKESAELTAKYNGGMAIYQIGEKGLLLDANISGSKYWIDKDLTETSR</sequence>
<feature type="signal peptide" evidence="1">
    <location>
        <begin position="1"/>
        <end position="21"/>
    </location>
</feature>
<feature type="chain" id="PRO_5015509583" description="Beta cell expansion factor A">
    <location>
        <begin position="22"/>
        <end position="261"/>
    </location>
</feature>
<feature type="region of interest" description="SYLF domain" evidence="7">
    <location>
        <begin position="99"/>
        <end position="261"/>
    </location>
</feature>
<feature type="mutagenesis site" description="Impairs membrane disruption." evidence="5">
    <original>R</original>
    <variation>A</variation>
    <location>
        <position position="195"/>
    </location>
</feature>
<feature type="helix" evidence="10">
    <location>
        <begin position="37"/>
        <end position="59"/>
    </location>
</feature>
<feature type="helix" evidence="10">
    <location>
        <begin position="62"/>
        <end position="67"/>
    </location>
</feature>
<feature type="helix" evidence="10">
    <location>
        <begin position="75"/>
        <end position="95"/>
    </location>
</feature>
<feature type="helix" evidence="10">
    <location>
        <begin position="101"/>
        <end position="122"/>
    </location>
</feature>
<feature type="helix" evidence="10">
    <location>
        <begin position="125"/>
        <end position="131"/>
    </location>
</feature>
<feature type="strand" evidence="10">
    <location>
        <begin position="134"/>
        <end position="142"/>
    </location>
</feature>
<feature type="strand" evidence="10">
    <location>
        <begin position="152"/>
        <end position="159"/>
    </location>
</feature>
<feature type="turn" evidence="10">
    <location>
        <begin position="160"/>
        <end position="162"/>
    </location>
</feature>
<feature type="strand" evidence="10">
    <location>
        <begin position="165"/>
        <end position="171"/>
    </location>
</feature>
<feature type="helix" evidence="10">
    <location>
        <begin position="173"/>
        <end position="177"/>
    </location>
</feature>
<feature type="strand" evidence="10">
    <location>
        <begin position="180"/>
        <end position="182"/>
    </location>
</feature>
<feature type="strand" evidence="10">
    <location>
        <begin position="185"/>
        <end position="192"/>
    </location>
</feature>
<feature type="helix" evidence="10">
    <location>
        <begin position="193"/>
        <end position="202"/>
    </location>
</feature>
<feature type="strand" evidence="10">
    <location>
        <begin position="215"/>
        <end position="217"/>
    </location>
</feature>
<feature type="helix" evidence="10">
    <location>
        <begin position="219"/>
        <end position="224"/>
    </location>
</feature>
<feature type="turn" evidence="10">
    <location>
        <begin position="225"/>
        <end position="228"/>
    </location>
</feature>
<feature type="strand" evidence="10">
    <location>
        <begin position="229"/>
        <end position="234"/>
    </location>
</feature>
<feature type="strand" evidence="10">
    <location>
        <begin position="236"/>
        <end position="239"/>
    </location>
</feature>
<feature type="strand" evidence="10">
    <location>
        <begin position="249"/>
        <end position="252"/>
    </location>
</feature>
<feature type="turn" evidence="10">
    <location>
        <begin position="254"/>
        <end position="256"/>
    </location>
</feature>
<proteinExistence type="evidence at protein level"/>
<keyword id="KW-0002">3D-structure</keyword>
<keyword id="KW-0964">Secreted</keyword>
<keyword id="KW-0732">Signal</keyword>
<dbReference type="EMBL" id="PPUW01000007">
    <property type="protein sequence ID" value="POG18869.1"/>
    <property type="molecule type" value="Genomic_DNA"/>
</dbReference>
<dbReference type="RefSeq" id="WP_021229875.1">
    <property type="nucleotide sequence ID" value="NZ_CAWNSG010000007.1"/>
</dbReference>
<dbReference type="PDB" id="7RFQ">
    <property type="method" value="X-ray"/>
    <property type="resolution" value="1.27 A"/>
    <property type="chains" value="A=1-261"/>
</dbReference>
<dbReference type="PDBsum" id="7RFQ"/>
<dbReference type="SMR" id="A0A2S3XLU2"/>
<dbReference type="KEGG" id="avo:AMS64_07270"/>
<dbReference type="GO" id="GO:0005576">
    <property type="term" value="C:extracellular region"/>
    <property type="evidence" value="ECO:0007669"/>
    <property type="project" value="UniProtKB-SubCell"/>
</dbReference>
<dbReference type="GO" id="GO:0018995">
    <property type="term" value="C:host cellular component"/>
    <property type="evidence" value="ECO:0007669"/>
    <property type="project" value="UniProtKB-SubCell"/>
</dbReference>
<evidence type="ECO:0000255" key="1"/>
<evidence type="ECO:0000269" key="2">
    <source>
    </source>
</evidence>
<evidence type="ECO:0000269" key="3">
    <source>
    </source>
</evidence>
<evidence type="ECO:0000269" key="4">
    <source>
    </source>
</evidence>
<evidence type="ECO:0000269" key="5">
    <source>
    </source>
</evidence>
<evidence type="ECO:0000303" key="6">
    <source>
    </source>
</evidence>
<evidence type="ECO:0000303" key="7">
    <source>
    </source>
</evidence>
<evidence type="ECO:0000312" key="8">
    <source>
        <dbReference type="EMBL" id="POG18869.1"/>
    </source>
</evidence>
<evidence type="ECO:0007744" key="9">
    <source>
        <dbReference type="PDB" id="7RFQ"/>
    </source>
</evidence>
<evidence type="ECO:0007829" key="10">
    <source>
        <dbReference type="PDB" id="7RFQ"/>
    </source>
</evidence>
<name>BEFA_AERVE</name>
<comment type="function">
    <text evidence="2 5">Stimulates the proliferation of insulin-producing beta cells during development in gnotobiotic zebrafish and mice (PubMed:27960075, PubMed:36240759). BefA is a microbiome-derived protein that traffics from the host intestinal lumen to the pancreas to act directly on pancreatic islets (PubMed:36240759). In pancreas, interacts directly with host beta cells and elicits their proliferation via a mechanism of increasing membrane permeabilization (PubMed:36240759). Can also permeabilize bacterial cell membranes, but does not show killing of target bacteria (PubMed:36240759).</text>
</comment>
<comment type="subcellular location">
    <subcellularLocation>
        <location evidence="2">Secreted</location>
    </subcellularLocation>
    <subcellularLocation>
        <location evidence="5">Host</location>
    </subcellularLocation>
    <text evidence="5">Can disseminate from the host gut lumen to the pancreas by multiple routes.</text>
</comment>
<comment type="domain">
    <text evidence="5">Contains a lipid-binding SYLF domain which is essential for activity.</text>
</comment>
<comment type="biotechnology">
    <text evidence="3 4">The antidiabetes effect of BefA was evaluated using type 1 diabetes mellitus (T1DM) and type 2 diabetes mellitus (T2DM) mice models (PubMed:34604109, PubMed:35186190). BefA protein significantly reduces blood glucose levels, maintains the body weight, improves the glucose tolerance and exerts a protective effect on islet beta cell morphology in a T1DM mice model (PubMed:34604109, PubMed:35186190). It also downregulates the expression of TLR-4, p-NFkappaB/NFkappaB and Bax/Bcl-2, and the secretion levels of the pro-inflammatory cytokines IL-1beta, IL-6 and TNF-alpha (PubMed:34604109, PubMed:35186190). Similarly, it increases islet beta cells and reduces the inflammatory reaction and apoptosis in T2DM mice (PubMed:35186190). BefA therefore alleviates diabetes via increasing the number of islet beta cells, reducing the inflammatory reaction and apoptosis, improving liver lipid metabolism and restoring microbial diversity to normal levels, which provides a new strategy for an oral drug for diabetes mellitus (DM) (PubMed:35186190).</text>
</comment>
<comment type="miscellaneous">
    <text evidence="5">Membrane permeabilization by microbiome-derived and host defense proteins is necessary and sufficient for beta cell expansion during pancreas development, potentially connecting microbiome composition with diabetes risk.</text>
</comment>
<reference key="1">
    <citation type="submission" date="2018-01" db="EMBL/GenBank/DDBJ databases">
        <title>Genome sequencing of Aeromonas veronii ML09-123.</title>
        <authorList>
            <person name="Tekedar H.C."/>
            <person name="Kumru S."/>
            <person name="Griffin M.J."/>
            <person name="Waldbieser G.C."/>
            <person name="Liles M.R."/>
            <person name="Sonstegard T."/>
            <person name="Schroeder S.G."/>
            <person name="Khoo L."/>
            <person name="Karsi A."/>
            <person name="Lawrence M.L."/>
        </authorList>
    </citation>
    <scope>NUCLEOTIDE SEQUENCE [LARGE SCALE GENOMIC DNA]</scope>
    <source>
        <strain>ML09-123</strain>
    </source>
</reference>
<reference key="2">
    <citation type="journal article" date="2016" name="Elife">
        <title>A conserved bacterial protein induces pancreatic beta cell expansion during zebrafish development.</title>
        <authorList>
            <person name="Hill J.H."/>
            <person name="Franzosa E.A."/>
            <person name="Huttenhower C."/>
            <person name="Guillemin K."/>
        </authorList>
    </citation>
    <scope>FUNCTION</scope>
    <scope>SUBCELLULAR LOCATION</scope>
    <source>
        <strain>HM21</strain>
    </source>
</reference>
<reference key="3">
    <citation type="journal article" date="2021" name="Front. Cell. Infect. Microbiol.">
        <title>Intestinal microbiota play an important role in the treatment of type i diabetes in mice with BefA protein.</title>
        <authorList>
            <person name="Qin Q."/>
            <person name="Chen Y."/>
            <person name="Li Y."/>
            <person name="Wei J."/>
            <person name="Zhou X."/>
            <person name="Le F."/>
            <person name="Hu H."/>
            <person name="Chen T."/>
        </authorList>
    </citation>
    <scope>BIOTECHNOLOGY</scope>
</reference>
<reference key="4">
    <citation type="journal article" date="2022" name="Oxid. Med. Cell. Longev.">
        <title>Oral administration of bacterial beta cell expansion factor A (BefA) alleviates diabetes in mice with type 1 and type 2 diabetes.</title>
        <authorList>
            <person name="Wang H."/>
            <person name="Wei J."/>
            <person name="Hu H."/>
            <person name="Le F."/>
            <person name="Wu H."/>
            <person name="Wei H."/>
            <person name="Luo J."/>
            <person name="Chen T."/>
        </authorList>
    </citation>
    <scope>BIOTECHNOLOGY</scope>
</reference>
<reference evidence="9" key="5">
    <citation type="journal article" date="2022" name="Cell Metab.">
        <title>BefA, a microbiota-secreted membrane disrupter, disseminates to the pancreas and increases beta cell mass.</title>
        <authorList>
            <person name="Hill J.H."/>
            <person name="Massaquoi M.S."/>
            <person name="Sweeney E.G."/>
            <person name="Wall E.S."/>
            <person name="Jahl P."/>
            <person name="Bell R."/>
            <person name="Kallio K."/>
            <person name="Derrick D."/>
            <person name="Murtaugh L.C."/>
            <person name="Parthasarathy R."/>
            <person name="Remington S.J."/>
            <person name="Round J.L."/>
            <person name="Guillemin K."/>
        </authorList>
    </citation>
    <scope>X-RAY CRYSTALLOGRAPHY (1.27 ANGSTROMS)</scope>
    <scope>FUNCTION</scope>
    <scope>SUBCELLULAR LOCATION</scope>
    <scope>DOMAIN</scope>
    <scope>MUTAGENESIS OF ARG-195</scope>
    <source>
        <strain>HM21</strain>
    </source>
</reference>
<gene>
    <name evidence="6" type="primary">befA</name>
    <name evidence="8" type="ORF">C2849_10765</name>
</gene>
<accession>A0A2S3XLU2</accession>
<protein>
    <recommendedName>
        <fullName evidence="6">Beta cell expansion factor A</fullName>
    </recommendedName>
</protein>
<organism>
    <name type="scientific">Aeromonas veronii</name>
    <dbReference type="NCBI Taxonomy" id="654"/>
    <lineage>
        <taxon>Bacteria</taxon>
        <taxon>Pseudomonadati</taxon>
        <taxon>Pseudomonadota</taxon>
        <taxon>Gammaproteobacteria</taxon>
        <taxon>Aeromonadales</taxon>
        <taxon>Aeromonadaceae</taxon>
        <taxon>Aeromonas</taxon>
    </lineage>
</organism>